<comment type="subcellular location">
    <subcellularLocation>
        <location evidence="1">Virion</location>
    </subcellularLocation>
</comment>
<comment type="induction">
    <text evidence="2">Expressed in the late phase of the viral replicative cycle.</text>
</comment>
<comment type="similarity">
    <text evidence="3">Belongs to the asfivirus K145R family.</text>
</comment>
<evidence type="ECO:0000269" key="1">
    <source>
    </source>
</evidence>
<evidence type="ECO:0000269" key="2">
    <source>
    </source>
</evidence>
<evidence type="ECO:0000305" key="3"/>
<protein>
    <recommendedName>
        <fullName>Uncharacterized protein K145R</fullName>
        <shortName>pK145R</shortName>
    </recommendedName>
</protein>
<gene>
    <name type="ordered locus">Ba71V-051</name>
    <name type="ORF">K145R</name>
</gene>
<name>VF145_ASFB7</name>
<organismHost>
    <name type="scientific">Ornithodoros</name>
    <name type="common">relapsing fever ticks</name>
    <dbReference type="NCBI Taxonomy" id="6937"/>
</organismHost>
<organismHost>
    <name type="scientific">Sus scrofa</name>
    <name type="common">Pig</name>
    <dbReference type="NCBI Taxonomy" id="9823"/>
</organismHost>
<proteinExistence type="evidence at transcript level"/>
<dbReference type="EMBL" id="Z21490">
    <property type="protein sequence ID" value="CAA79699.1"/>
    <property type="molecule type" value="Genomic_DNA"/>
</dbReference>
<dbReference type="EMBL" id="U18466">
    <property type="protein sequence ID" value="AAA65281.1"/>
    <property type="molecule type" value="Genomic_DNA"/>
</dbReference>
<dbReference type="PIR" id="S33997">
    <property type="entry name" value="S33997"/>
</dbReference>
<dbReference type="RefSeq" id="NP_042745.1">
    <property type="nucleotide sequence ID" value="NC_001659.2"/>
</dbReference>
<dbReference type="SMR" id="Q07385"/>
<dbReference type="GeneID" id="22220433"/>
<dbReference type="KEGG" id="vg:22220433"/>
<dbReference type="Proteomes" id="UP000000624">
    <property type="component" value="Segment"/>
</dbReference>
<dbReference type="GO" id="GO:0044423">
    <property type="term" value="C:virion component"/>
    <property type="evidence" value="ECO:0007669"/>
    <property type="project" value="UniProtKB-KW"/>
</dbReference>
<keyword id="KW-0426">Late protein</keyword>
<keyword id="KW-1185">Reference proteome</keyword>
<keyword id="KW-0946">Virion</keyword>
<accession>Q07385</accession>
<feature type="chain" id="PRO_0000373519" description="Uncharacterized protein K145R">
    <location>
        <begin position="1"/>
        <end position="145"/>
    </location>
</feature>
<organism>
    <name type="scientific">African swine fever virus (strain Badajoz 1971 Vero-adapted)</name>
    <name type="common">Ba71V</name>
    <name type="synonym">ASFV</name>
    <dbReference type="NCBI Taxonomy" id="10498"/>
    <lineage>
        <taxon>Viruses</taxon>
        <taxon>Varidnaviria</taxon>
        <taxon>Bamfordvirae</taxon>
        <taxon>Nucleocytoviricota</taxon>
        <taxon>Pokkesviricetes</taxon>
        <taxon>Asfuvirales</taxon>
        <taxon>Asfarviridae</taxon>
        <taxon>Asfivirus</taxon>
        <taxon>African swine fever virus</taxon>
    </lineage>
</organism>
<sequence length="145" mass="17193">MDHYLKKLQDIYTKLEGHPFLFSPSKTNEKEFITLLNQALASTQLYRSIQQLFLTMYKLDPIGFINYIKTSKQEYLCLLINPKLVTKFLKITSFKIYINFRLKTFYISPNKYNNFYTAPSEEKTNHLLKEEKTWAKIVEEGGEES</sequence>
<reference key="1">
    <citation type="journal article" date="1993" name="Nucleic Acids Res.">
        <title>African swine fever virus encodes two genes which share significant homology with the two largest subunits of DNA-dependent RNA polymerases.</title>
        <authorList>
            <person name="Yanez R.J."/>
            <person name="Boursnell M.E."/>
            <person name="Nogal M.L."/>
            <person name="Yuste L."/>
            <person name="Vinuela E."/>
        </authorList>
    </citation>
    <scope>NUCLEOTIDE SEQUENCE [GENOMIC DNA]</scope>
</reference>
<reference key="2">
    <citation type="journal article" date="1995" name="Virology">
        <title>Analysis of the complete nucleotide sequence of African swine fever virus.</title>
        <authorList>
            <person name="Yanez R.J."/>
            <person name="Rodriguez J.M."/>
            <person name="Nogal M.L."/>
            <person name="Yuste L."/>
            <person name="Enriquez C."/>
            <person name="Rodriguez J.F."/>
            <person name="Vinuela E."/>
        </authorList>
    </citation>
    <scope>NUCLEOTIDE SEQUENCE [LARGE SCALE GENOMIC DNA]</scope>
</reference>
<reference key="3">
    <citation type="journal article" date="2018" name="J. Virol.">
        <title>A Proteomic Atlas of the African Swine Fever Virus Particle.</title>
        <authorList>
            <person name="Alejo A."/>
            <person name="Matamoros T."/>
            <person name="Guerra M."/>
            <person name="Andres G."/>
        </authorList>
    </citation>
    <scope>SUBCELLULAR LOCATION</scope>
</reference>
<reference key="4">
    <citation type="journal article" date="2020" name="J. Virol.">
        <title>The African Swine Fever Virus Transcriptome.</title>
        <authorList>
            <person name="Cackett G."/>
            <person name="Matelska D."/>
            <person name="Sykora M."/>
            <person name="Portugal R."/>
            <person name="Malecki M."/>
            <person name="Baehler J."/>
            <person name="Dixon L."/>
            <person name="Werner F."/>
        </authorList>
    </citation>
    <scope>INDUCTION</scope>
</reference>